<organism>
    <name type="scientific">Escherichia coli (strain K12)</name>
    <dbReference type="NCBI Taxonomy" id="83333"/>
    <lineage>
        <taxon>Bacteria</taxon>
        <taxon>Pseudomonadati</taxon>
        <taxon>Pseudomonadota</taxon>
        <taxon>Gammaproteobacteria</taxon>
        <taxon>Enterobacterales</taxon>
        <taxon>Enterobacteriaceae</taxon>
        <taxon>Escherichia</taxon>
    </lineage>
</organism>
<sequence length="230" mass="27200">MKKINAIILLSSLTSASVFAGAYVENREAYNLASDQGEVMLRVGYNFDMGAGIMLTNTYNFQREDELKHGYNEIEGWYPLFKPTDKLTIQPGGLINDKSIGSGGAVYLDVNYKFVPWFNLTVRNRYNHNNYSSTDLSGELDNNDTYEIGTYWNFKITDKFSYTFEPHYFMRVNDFNSSNGKDHHWEITNTFRYRINEHWLPYFELRWLDRNVEPYHREQNQIRIGTKYFF</sequence>
<feature type="signal peptide" evidence="1">
    <location>
        <begin position="1"/>
        <end position="20"/>
    </location>
</feature>
<feature type="chain" id="PRO_0000016605" description="Porin OmpL">
    <location>
        <begin position="21"/>
        <end position="230"/>
    </location>
</feature>
<accession>P76773</accession>
<accession>Q2M8H2</accession>
<gene>
    <name type="primary">ompL</name>
    <name type="synonym">yshA</name>
    <name type="ordered locus">b3875</name>
    <name type="ordered locus">JW3846</name>
</gene>
<dbReference type="EMBL" id="L19201">
    <property type="protein sequence ID" value="AAB03009.1"/>
    <property type="status" value="ALT_FRAME"/>
    <property type="molecule type" value="Genomic_DNA"/>
</dbReference>
<dbReference type="EMBL" id="U00096">
    <property type="protein sequence ID" value="AAC76872.1"/>
    <property type="molecule type" value="Genomic_DNA"/>
</dbReference>
<dbReference type="EMBL" id="AP009048">
    <property type="protein sequence ID" value="BAE77434.1"/>
    <property type="molecule type" value="Genomic_DNA"/>
</dbReference>
<dbReference type="PIR" id="F65192">
    <property type="entry name" value="F65192"/>
</dbReference>
<dbReference type="RefSeq" id="NP_418311.1">
    <property type="nucleotide sequence ID" value="NC_000913.3"/>
</dbReference>
<dbReference type="RefSeq" id="WP_000723465.1">
    <property type="nucleotide sequence ID" value="NZ_LN832404.1"/>
</dbReference>
<dbReference type="SMR" id="P76773"/>
<dbReference type="BioGRID" id="4262635">
    <property type="interactions" value="237"/>
</dbReference>
<dbReference type="FunCoup" id="P76773">
    <property type="interactions" value="153"/>
</dbReference>
<dbReference type="IntAct" id="P76773">
    <property type="interactions" value="21"/>
</dbReference>
<dbReference type="STRING" id="511145.b3875"/>
<dbReference type="TCDB" id="1.B.35.2.2">
    <property type="family name" value="the oligogalacturonate-specific porin (kdgm) family"/>
</dbReference>
<dbReference type="PaxDb" id="511145-b3875"/>
<dbReference type="EnsemblBacteria" id="AAC76872">
    <property type="protein sequence ID" value="AAC76872"/>
    <property type="gene ID" value="b3875"/>
</dbReference>
<dbReference type="GeneID" id="948366"/>
<dbReference type="KEGG" id="ecj:JW3846"/>
<dbReference type="KEGG" id="eco:b3875"/>
<dbReference type="KEGG" id="ecoc:C3026_20950"/>
<dbReference type="PATRIC" id="fig|1411691.4.peg.2836"/>
<dbReference type="EchoBASE" id="EB3156"/>
<dbReference type="eggNOG" id="COG1452">
    <property type="taxonomic scope" value="Bacteria"/>
</dbReference>
<dbReference type="HOGENOM" id="CLU_103714_0_0_6"/>
<dbReference type="InParanoid" id="P76773"/>
<dbReference type="OMA" id="DTHEFAN"/>
<dbReference type="OrthoDB" id="6587074at2"/>
<dbReference type="PhylomeDB" id="P76773"/>
<dbReference type="BioCyc" id="EcoCyc:G7814-MONOMER"/>
<dbReference type="PRO" id="PR:P76773"/>
<dbReference type="Proteomes" id="UP000000625">
    <property type="component" value="Chromosome"/>
</dbReference>
<dbReference type="GO" id="GO:0009279">
    <property type="term" value="C:cell outer membrane"/>
    <property type="evidence" value="ECO:0000314"/>
    <property type="project" value="EcoliWiki"/>
</dbReference>
<dbReference type="GO" id="GO:0046930">
    <property type="term" value="C:pore complex"/>
    <property type="evidence" value="ECO:0007669"/>
    <property type="project" value="UniProtKB-KW"/>
</dbReference>
<dbReference type="GO" id="GO:0015288">
    <property type="term" value="F:porin activity"/>
    <property type="evidence" value="ECO:0000314"/>
    <property type="project" value="EcoCyc"/>
</dbReference>
<dbReference type="GO" id="GO:0015751">
    <property type="term" value="P:arabinose transmembrane transport"/>
    <property type="evidence" value="ECO:0000314"/>
    <property type="project" value="EcoliWiki"/>
</dbReference>
<dbReference type="GO" id="GO:0046323">
    <property type="term" value="P:D-glucose import"/>
    <property type="evidence" value="ECO:0000314"/>
    <property type="project" value="EcoliWiki"/>
</dbReference>
<dbReference type="GO" id="GO:0015757">
    <property type="term" value="P:galactose transmembrane transport"/>
    <property type="evidence" value="ECO:0000314"/>
    <property type="project" value="EcoliWiki"/>
</dbReference>
<dbReference type="GO" id="GO:0006811">
    <property type="term" value="P:monoatomic ion transport"/>
    <property type="evidence" value="ECO:0007669"/>
    <property type="project" value="UniProtKB-KW"/>
</dbReference>
<dbReference type="GO" id="GO:0015772">
    <property type="term" value="P:oligosaccharide transport"/>
    <property type="evidence" value="ECO:0000318"/>
    <property type="project" value="GO_Central"/>
</dbReference>
<dbReference type="FunFam" id="2.40.160.40:FF:000001">
    <property type="entry name" value="Porin OmpL"/>
    <property type="match status" value="1"/>
</dbReference>
<dbReference type="Gene3D" id="2.40.160.40">
    <property type="entry name" value="monomeric porin ompg"/>
    <property type="match status" value="1"/>
</dbReference>
<dbReference type="InterPro" id="IPR053713">
    <property type="entry name" value="Bact_OM_Channel_sf"/>
</dbReference>
<dbReference type="InterPro" id="IPR009331">
    <property type="entry name" value="Oligogalacturonate-sp_porin"/>
</dbReference>
<dbReference type="NCBIfam" id="NF007434">
    <property type="entry name" value="PRK09980.1"/>
    <property type="match status" value="1"/>
</dbReference>
<dbReference type="PANTHER" id="PTHR38105:SF2">
    <property type="entry name" value="N-ACETYLNEURAMINIC ACID OUTER MEMBRANE CHANNEL PROTEIN NANC-RELATED"/>
    <property type="match status" value="1"/>
</dbReference>
<dbReference type="PANTHER" id="PTHR38105">
    <property type="entry name" value="OUTER MEMBRANE PROTEIN-RELATED-RELATED"/>
    <property type="match status" value="1"/>
</dbReference>
<dbReference type="Pfam" id="PF06178">
    <property type="entry name" value="KdgM"/>
    <property type="match status" value="1"/>
</dbReference>
<dbReference type="SUPFAM" id="SSF56935">
    <property type="entry name" value="Porins"/>
    <property type="match status" value="1"/>
</dbReference>
<comment type="function">
    <text evidence="2">Outer membrane channel protein that allows an efficient diffusion of low-molecular-weight solutes such as small sugars and tetraglycine. However, the specific substrate recognized by the OmpL channel is unknown.</text>
</comment>
<comment type="subcellular location">
    <subcellularLocation>
        <location evidence="1">Cell outer membrane</location>
    </subcellularLocation>
</comment>
<comment type="similarity">
    <text evidence="3">Belongs to the oligogalacturonate-specific porin KdgM (TC 1.B.35) family. OmpL subfamily.</text>
</comment>
<comment type="caution">
    <text evidence="3">In contrast to PubMed:11080145, PubMed:12660153 demonstrates that OmpL actually plays no perceptible role in modulating redox potential in the periplasm of E.coli.</text>
</comment>
<keyword id="KW-0998">Cell outer membrane</keyword>
<keyword id="KW-0903">Direct protein sequencing</keyword>
<keyword id="KW-0406">Ion transport</keyword>
<keyword id="KW-0472">Membrane</keyword>
<keyword id="KW-0626">Porin</keyword>
<keyword id="KW-1185">Reference proteome</keyword>
<keyword id="KW-0732">Signal</keyword>
<keyword id="KW-0762">Sugar transport</keyword>
<keyword id="KW-0812">Transmembrane</keyword>
<keyword id="KW-1134">Transmembrane beta strand</keyword>
<keyword id="KW-0813">Transport</keyword>
<name>OMPL_ECOLI</name>
<proteinExistence type="evidence at protein level"/>
<reference key="1">
    <citation type="journal article" date="1993" name="Nucleic Acids Res.">
        <title>Analysis of the Escherichia coli genome. III. DNA sequence of the region from 87.2 to 89.2 minutes.</title>
        <authorList>
            <person name="Plunkett G. III"/>
            <person name="Burland V."/>
            <person name="Daniels D.L."/>
            <person name="Blattner F.R."/>
        </authorList>
    </citation>
    <scope>NUCLEOTIDE SEQUENCE [LARGE SCALE GENOMIC DNA]</scope>
    <source>
        <strain>K12 / MG1655 / ATCC 47076</strain>
    </source>
</reference>
<reference key="2">
    <citation type="journal article" date="1997" name="Science">
        <title>The complete genome sequence of Escherichia coli K-12.</title>
        <authorList>
            <person name="Blattner F.R."/>
            <person name="Plunkett G. III"/>
            <person name="Bloch C.A."/>
            <person name="Perna N.T."/>
            <person name="Burland V."/>
            <person name="Riley M."/>
            <person name="Collado-Vides J."/>
            <person name="Glasner J.D."/>
            <person name="Rode C.K."/>
            <person name="Mayhew G.F."/>
            <person name="Gregor J."/>
            <person name="Davis N.W."/>
            <person name="Kirkpatrick H.A."/>
            <person name="Goeden M.A."/>
            <person name="Rose D.J."/>
            <person name="Mau B."/>
            <person name="Shao Y."/>
        </authorList>
    </citation>
    <scope>NUCLEOTIDE SEQUENCE [LARGE SCALE GENOMIC DNA]</scope>
    <scope>SEQUENCE REVISION</scope>
    <source>
        <strain>K12 / MG1655 / ATCC 47076</strain>
    </source>
</reference>
<reference key="3">
    <citation type="journal article" date="2006" name="Mol. Syst. Biol.">
        <title>Highly accurate genome sequences of Escherichia coli K-12 strains MG1655 and W3110.</title>
        <authorList>
            <person name="Hayashi K."/>
            <person name="Morooka N."/>
            <person name="Yamamoto Y."/>
            <person name="Fujita K."/>
            <person name="Isono K."/>
            <person name="Choi S."/>
            <person name="Ohtsubo E."/>
            <person name="Baba T."/>
            <person name="Wanner B.L."/>
            <person name="Mori H."/>
            <person name="Horiuchi T."/>
        </authorList>
    </citation>
    <scope>NUCLEOTIDE SEQUENCE [LARGE SCALE GENOMIC DNA]</scope>
    <source>
        <strain>K12 / W3110 / ATCC 27325 / DSM 5911</strain>
    </source>
</reference>
<reference key="4">
    <citation type="journal article" date="2000" name="EMBO J.">
        <title>Protein folding in the periplasm in the absence of primary oxidant DsbA: modulation of redox potential in periplasmic space via OmpL porin.</title>
        <authorList>
            <person name="Dartigalongue C."/>
            <person name="Nikaido H."/>
            <person name="Raina S."/>
        </authorList>
    </citation>
    <scope>PROTEIN SEQUENCE OF 21-25</scope>
    <scope>CHANNEL FUNCTION</scope>
    <scope>SUBCELLULAR LOCATION</scope>
</reference>
<reference key="5">
    <citation type="journal article" date="2004" name="EMBO J.">
        <authorList>
            <person name="Dartigalongue C."/>
            <person name="Nikaido H."/>
            <person name="Raina S."/>
        </authorList>
    </citation>
    <scope>ERRATUM OF PUBMED:11080145</scope>
</reference>
<reference key="6">
    <citation type="journal article" date="2003" name="EMBO J.">
        <title>The OmpL porin does not modulate redox potential in the periplasmic space of Escherichia coli.</title>
        <authorList>
            <person name="Sardesai A.A."/>
            <person name="Genevaux P."/>
            <person name="Schwager F."/>
            <person name="Ang D."/>
            <person name="Georgopoulos C."/>
        </authorList>
    </citation>
    <scope>FUNCTION</scope>
    <source>
        <strain>K12</strain>
    </source>
</reference>
<evidence type="ECO:0000269" key="1">
    <source>
    </source>
</evidence>
<evidence type="ECO:0000269" key="2">
    <source>
    </source>
</evidence>
<evidence type="ECO:0000305" key="3"/>
<protein>
    <recommendedName>
        <fullName>Porin OmpL</fullName>
    </recommendedName>
</protein>